<accession>Q6FRG0</accession>
<keyword id="KW-0010">Activator</keyword>
<keyword id="KW-0539">Nucleus</keyword>
<keyword id="KW-1185">Reference proteome</keyword>
<keyword id="KW-0804">Transcription</keyword>
<keyword id="KW-0805">Transcription regulation</keyword>
<sequence length="658" mass="73097">MSDAGDSKLAKEQSDASTGTCNGNGTGNGTGSGTATANATTTPTPTPTSIPTAAGSVTDVTATSSMVLAKLDDISSRLTMLESNFNNVFSKINDQNSMILDLKQNNSHAFLRLSSKVNKLETHVAALASNNPQSAFVTDLLNSITNVSSSYLRKMKHNGAENLNVQLSTHENGFVHPTPNDSPNMMGPIYYNQIETSKARGQLKSLNRKKTFTLNPNGIKKRRLGHHHGNSGSRSNNLNVTFDITGQVGQPGYDTSLNSATPNNHAMTPSNVISSSNSYSELQSLNGLQSNTTASDGRTLSPVNTVQALKTPYLTATNQHSLNHGSLNNYNLNFPQFLDNTNSVTLSRLGSSSPVEKRDGIVMSHSAPQLDNGSITYPDNRLHIRNQASQDILGGASQGQPQKINNIDEDGYQEDDEEEESELNKHKNKVGNLKYNTTLTDSHSINDDRKPTVNVYASTGHPVNNTKSEYLEDDESNDSDNSHETDEESEDEVEEYDEEDDMVNEEDRQPYSRKPKEPASERKRKKLRKINKYRNNVIEPRKKDDKEKDAQNSDLNYMLLKAPSSVKTIWEEYVNGIDGNPSIRGLEEKYGNKWRIKRNKKTFSRRKRLYKFILNGIDKGKTADEMIDMLEKQRLYRDENGEIKRRTIGWLQQSLIGI</sequence>
<protein>
    <recommendedName>
        <fullName>High-osmolarity-induced transcription protein 1</fullName>
    </recommendedName>
</protein>
<feature type="chain" id="PRO_0000289669" description="High-osmolarity-induced transcription protein 1">
    <location>
        <begin position="1"/>
        <end position="658"/>
    </location>
</feature>
<feature type="region of interest" description="Disordered" evidence="2">
    <location>
        <begin position="1"/>
        <end position="55"/>
    </location>
</feature>
<feature type="region of interest" description="Disordered" evidence="2">
    <location>
        <begin position="218"/>
        <end position="237"/>
    </location>
</feature>
<feature type="region of interest" description="Disordered" evidence="2">
    <location>
        <begin position="392"/>
        <end position="550"/>
    </location>
</feature>
<feature type="compositionally biased region" description="Basic and acidic residues" evidence="2">
    <location>
        <begin position="1"/>
        <end position="14"/>
    </location>
</feature>
<feature type="compositionally biased region" description="Gly residues" evidence="2">
    <location>
        <begin position="22"/>
        <end position="32"/>
    </location>
</feature>
<feature type="compositionally biased region" description="Low complexity" evidence="2">
    <location>
        <begin position="33"/>
        <end position="55"/>
    </location>
</feature>
<feature type="compositionally biased region" description="Basic residues" evidence="2">
    <location>
        <begin position="219"/>
        <end position="229"/>
    </location>
</feature>
<feature type="compositionally biased region" description="Acidic residues" evidence="2">
    <location>
        <begin position="407"/>
        <end position="421"/>
    </location>
</feature>
<feature type="compositionally biased region" description="Polar residues" evidence="2">
    <location>
        <begin position="434"/>
        <end position="443"/>
    </location>
</feature>
<feature type="compositionally biased region" description="Polar residues" evidence="2">
    <location>
        <begin position="455"/>
        <end position="467"/>
    </location>
</feature>
<feature type="compositionally biased region" description="Acidic residues" evidence="2">
    <location>
        <begin position="485"/>
        <end position="504"/>
    </location>
</feature>
<feature type="compositionally biased region" description="Basic and acidic residues" evidence="2">
    <location>
        <begin position="505"/>
        <end position="521"/>
    </location>
</feature>
<feature type="compositionally biased region" description="Basic residues" evidence="2">
    <location>
        <begin position="522"/>
        <end position="532"/>
    </location>
</feature>
<feature type="compositionally biased region" description="Basic and acidic residues" evidence="2">
    <location>
        <begin position="539"/>
        <end position="550"/>
    </location>
</feature>
<organism>
    <name type="scientific">Candida glabrata (strain ATCC 2001 / BCRC 20586 / JCM 3761 / NBRC 0622 / NRRL Y-65 / CBS 138)</name>
    <name type="common">Yeast</name>
    <name type="synonym">Nakaseomyces glabratus</name>
    <dbReference type="NCBI Taxonomy" id="284593"/>
    <lineage>
        <taxon>Eukaryota</taxon>
        <taxon>Fungi</taxon>
        <taxon>Dikarya</taxon>
        <taxon>Ascomycota</taxon>
        <taxon>Saccharomycotina</taxon>
        <taxon>Saccharomycetes</taxon>
        <taxon>Saccharomycetales</taxon>
        <taxon>Saccharomycetaceae</taxon>
        <taxon>Nakaseomyces</taxon>
    </lineage>
</organism>
<comment type="function">
    <text evidence="1">Required for a complete transcriptional response to osmotic stress.</text>
</comment>
<comment type="subcellular location">
    <subcellularLocation>
        <location evidence="1">Nucleus</location>
    </subcellularLocation>
</comment>
<comment type="similarity">
    <text evidence="3">Belongs to the HOT1 family.</text>
</comment>
<dbReference type="EMBL" id="CR380954">
    <property type="protein sequence ID" value="CAG60117.1"/>
    <property type="molecule type" value="Genomic_DNA"/>
</dbReference>
<dbReference type="RefSeq" id="XP_447184.1">
    <property type="nucleotide sequence ID" value="XM_447184.1"/>
</dbReference>
<dbReference type="SMR" id="Q6FRG0"/>
<dbReference type="FunCoup" id="Q6FRG0">
    <property type="interactions" value="302"/>
</dbReference>
<dbReference type="STRING" id="284593.Q6FRG0"/>
<dbReference type="EnsemblFungi" id="CAGL0H08866g-T">
    <property type="protein sequence ID" value="CAGL0H08866g-T-p1"/>
    <property type="gene ID" value="CAGL0H08866g"/>
</dbReference>
<dbReference type="KEGG" id="cgr:2888634"/>
<dbReference type="CGD" id="CAL0131714">
    <property type="gene designation" value="CAGL0H08866g"/>
</dbReference>
<dbReference type="VEuPathDB" id="FungiDB:CAGL0H08866g"/>
<dbReference type="eggNOG" id="ENOG502QQ7G">
    <property type="taxonomic scope" value="Eukaryota"/>
</dbReference>
<dbReference type="HOGENOM" id="CLU_023418_0_0_1"/>
<dbReference type="InParanoid" id="Q6FRG0"/>
<dbReference type="OMA" id="KTIWEEY"/>
<dbReference type="Proteomes" id="UP000002428">
    <property type="component" value="Chromosome H"/>
</dbReference>
<dbReference type="GO" id="GO:0005634">
    <property type="term" value="C:nucleus"/>
    <property type="evidence" value="ECO:0007669"/>
    <property type="project" value="UniProtKB-SubCell"/>
</dbReference>
<dbReference type="GO" id="GO:0000981">
    <property type="term" value="F:DNA-binding transcription factor activity, RNA polymerase II-specific"/>
    <property type="evidence" value="ECO:0007669"/>
    <property type="project" value="TreeGrafter"/>
</dbReference>
<dbReference type="GO" id="GO:0000978">
    <property type="term" value="F:RNA polymerase II cis-regulatory region sequence-specific DNA binding"/>
    <property type="evidence" value="ECO:0007669"/>
    <property type="project" value="TreeGrafter"/>
</dbReference>
<dbReference type="GO" id="GO:0060963">
    <property type="term" value="P:positive regulation of ribosomal protein gene transcription by RNA polymerase II"/>
    <property type="evidence" value="ECO:0007669"/>
    <property type="project" value="TreeGrafter"/>
</dbReference>
<dbReference type="InterPro" id="IPR052146">
    <property type="entry name" value="HOT1"/>
</dbReference>
<dbReference type="InterPro" id="IPR022210">
    <property type="entry name" value="TF_GCR1-like"/>
</dbReference>
<dbReference type="PANTHER" id="PTHR37784:SF2">
    <property type="entry name" value="HIGH-OSMOLARITY-INDUCED TRANSCRIPTION PROTEIN 1"/>
    <property type="match status" value="1"/>
</dbReference>
<dbReference type="PANTHER" id="PTHR37784">
    <property type="entry name" value="PROTEIN MSN1"/>
    <property type="match status" value="1"/>
</dbReference>
<dbReference type="Pfam" id="PF12550">
    <property type="entry name" value="GCR1_C"/>
    <property type="match status" value="1"/>
</dbReference>
<reference key="1">
    <citation type="journal article" date="2004" name="Nature">
        <title>Genome evolution in yeasts.</title>
        <authorList>
            <person name="Dujon B."/>
            <person name="Sherman D."/>
            <person name="Fischer G."/>
            <person name="Durrens P."/>
            <person name="Casaregola S."/>
            <person name="Lafontaine I."/>
            <person name="de Montigny J."/>
            <person name="Marck C."/>
            <person name="Neuveglise C."/>
            <person name="Talla E."/>
            <person name="Goffard N."/>
            <person name="Frangeul L."/>
            <person name="Aigle M."/>
            <person name="Anthouard V."/>
            <person name="Babour A."/>
            <person name="Barbe V."/>
            <person name="Barnay S."/>
            <person name="Blanchin S."/>
            <person name="Beckerich J.-M."/>
            <person name="Beyne E."/>
            <person name="Bleykasten C."/>
            <person name="Boisrame A."/>
            <person name="Boyer J."/>
            <person name="Cattolico L."/>
            <person name="Confanioleri F."/>
            <person name="de Daruvar A."/>
            <person name="Despons L."/>
            <person name="Fabre E."/>
            <person name="Fairhead C."/>
            <person name="Ferry-Dumazet H."/>
            <person name="Groppi A."/>
            <person name="Hantraye F."/>
            <person name="Hennequin C."/>
            <person name="Jauniaux N."/>
            <person name="Joyet P."/>
            <person name="Kachouri R."/>
            <person name="Kerrest A."/>
            <person name="Koszul R."/>
            <person name="Lemaire M."/>
            <person name="Lesur I."/>
            <person name="Ma L."/>
            <person name="Muller H."/>
            <person name="Nicaud J.-M."/>
            <person name="Nikolski M."/>
            <person name="Oztas S."/>
            <person name="Ozier-Kalogeropoulos O."/>
            <person name="Pellenz S."/>
            <person name="Potier S."/>
            <person name="Richard G.-F."/>
            <person name="Straub M.-L."/>
            <person name="Suleau A."/>
            <person name="Swennen D."/>
            <person name="Tekaia F."/>
            <person name="Wesolowski-Louvel M."/>
            <person name="Westhof E."/>
            <person name="Wirth B."/>
            <person name="Zeniou-Meyer M."/>
            <person name="Zivanovic Y."/>
            <person name="Bolotin-Fukuhara M."/>
            <person name="Thierry A."/>
            <person name="Bouchier C."/>
            <person name="Caudron B."/>
            <person name="Scarpelli C."/>
            <person name="Gaillardin C."/>
            <person name="Weissenbach J."/>
            <person name="Wincker P."/>
            <person name="Souciet J.-L."/>
        </authorList>
    </citation>
    <scope>NUCLEOTIDE SEQUENCE [LARGE SCALE GENOMIC DNA]</scope>
    <source>
        <strain>ATCC 2001 / BCRC 20586 / JCM 3761 / NBRC 0622 / NRRL Y-65 / CBS 138</strain>
    </source>
</reference>
<proteinExistence type="inferred from homology"/>
<gene>
    <name type="primary">HOT1</name>
    <name type="ordered locus">CAGL0H08866g</name>
</gene>
<evidence type="ECO:0000250" key="1"/>
<evidence type="ECO:0000256" key="2">
    <source>
        <dbReference type="SAM" id="MobiDB-lite"/>
    </source>
</evidence>
<evidence type="ECO:0000305" key="3"/>
<name>HOT1_CANGA</name>